<gene>
    <name evidence="1" type="primary">iolA</name>
    <name type="ordered locus">Bcer98_1729</name>
</gene>
<reference key="1">
    <citation type="journal article" date="2008" name="Chem. Biol. Interact.">
        <title>Extending the Bacillus cereus group genomics to putative food-borne pathogens of different toxicity.</title>
        <authorList>
            <person name="Lapidus A."/>
            <person name="Goltsman E."/>
            <person name="Auger S."/>
            <person name="Galleron N."/>
            <person name="Segurens B."/>
            <person name="Dossat C."/>
            <person name="Land M.L."/>
            <person name="Broussolle V."/>
            <person name="Brillard J."/>
            <person name="Guinebretiere M.-H."/>
            <person name="Sanchis V."/>
            <person name="Nguen-the C."/>
            <person name="Lereclus D."/>
            <person name="Richardson P."/>
            <person name="Wincker P."/>
            <person name="Weissenbach J."/>
            <person name="Ehrlich S.D."/>
            <person name="Sorokin A."/>
        </authorList>
    </citation>
    <scope>NUCLEOTIDE SEQUENCE [LARGE SCALE GENOMIC DNA]</scope>
    <source>
        <strain>DSM 22905 / CIP 110041 / 391-98 / NVH 391-98</strain>
    </source>
</reference>
<name>IOLA_BACCN</name>
<dbReference type="EC" id="1.2.1.27" evidence="1"/>
<dbReference type="EMBL" id="CP000764">
    <property type="protein sequence ID" value="ABS22031.1"/>
    <property type="molecule type" value="Genomic_DNA"/>
</dbReference>
<dbReference type="RefSeq" id="WP_012094220.1">
    <property type="nucleotide sequence ID" value="NC_009674.1"/>
</dbReference>
<dbReference type="SMR" id="A7GPH3"/>
<dbReference type="STRING" id="315749.Bcer98_1729"/>
<dbReference type="GeneID" id="33897052"/>
<dbReference type="KEGG" id="bcy:Bcer98_1729"/>
<dbReference type="eggNOG" id="COG1012">
    <property type="taxonomic scope" value="Bacteria"/>
</dbReference>
<dbReference type="HOGENOM" id="CLU_005391_1_0_9"/>
<dbReference type="OrthoDB" id="9762913at2"/>
<dbReference type="UniPathway" id="UPA00076">
    <property type="reaction ID" value="UER00148"/>
</dbReference>
<dbReference type="Proteomes" id="UP000002300">
    <property type="component" value="Chromosome"/>
</dbReference>
<dbReference type="GO" id="GO:0018478">
    <property type="term" value="F:malonate-semialdehyde dehydrogenase (acetylating) activity"/>
    <property type="evidence" value="ECO:0007669"/>
    <property type="project" value="UniProtKB-UniRule"/>
</dbReference>
<dbReference type="GO" id="GO:0004491">
    <property type="term" value="F:methylmalonate-semialdehyde dehydrogenase (acylating, NAD) activity"/>
    <property type="evidence" value="ECO:0007669"/>
    <property type="project" value="UniProtKB-UniRule"/>
</dbReference>
<dbReference type="GO" id="GO:0019310">
    <property type="term" value="P:inositol catabolic process"/>
    <property type="evidence" value="ECO:0007669"/>
    <property type="project" value="UniProtKB-UniRule"/>
</dbReference>
<dbReference type="GO" id="GO:0006210">
    <property type="term" value="P:thymine catabolic process"/>
    <property type="evidence" value="ECO:0007669"/>
    <property type="project" value="TreeGrafter"/>
</dbReference>
<dbReference type="GO" id="GO:0006574">
    <property type="term" value="P:valine catabolic process"/>
    <property type="evidence" value="ECO:0007669"/>
    <property type="project" value="TreeGrafter"/>
</dbReference>
<dbReference type="CDD" id="cd07085">
    <property type="entry name" value="ALDH_F6_MMSDH"/>
    <property type="match status" value="1"/>
</dbReference>
<dbReference type="FunFam" id="3.40.309.10:FF:000002">
    <property type="entry name" value="Methylmalonate-semialdehyde dehydrogenase (Acylating)"/>
    <property type="match status" value="1"/>
</dbReference>
<dbReference type="FunFam" id="3.40.605.10:FF:000003">
    <property type="entry name" value="Methylmalonate-semialdehyde dehydrogenase [acylating]"/>
    <property type="match status" value="1"/>
</dbReference>
<dbReference type="Gene3D" id="3.40.605.10">
    <property type="entry name" value="Aldehyde Dehydrogenase, Chain A, domain 1"/>
    <property type="match status" value="1"/>
</dbReference>
<dbReference type="Gene3D" id="3.40.309.10">
    <property type="entry name" value="Aldehyde Dehydrogenase, Chain A, domain 2"/>
    <property type="match status" value="1"/>
</dbReference>
<dbReference type="HAMAP" id="MF_01670">
    <property type="entry name" value="IolA"/>
    <property type="match status" value="1"/>
</dbReference>
<dbReference type="InterPro" id="IPR016161">
    <property type="entry name" value="Ald_DH/histidinol_DH"/>
</dbReference>
<dbReference type="InterPro" id="IPR016163">
    <property type="entry name" value="Ald_DH_C"/>
</dbReference>
<dbReference type="InterPro" id="IPR016160">
    <property type="entry name" value="Ald_DH_CS_CYS"/>
</dbReference>
<dbReference type="InterPro" id="IPR016162">
    <property type="entry name" value="Ald_DH_N"/>
</dbReference>
<dbReference type="InterPro" id="IPR015590">
    <property type="entry name" value="Aldehyde_DH_dom"/>
</dbReference>
<dbReference type="InterPro" id="IPR010061">
    <property type="entry name" value="MeMal-semiAld_DH"/>
</dbReference>
<dbReference type="InterPro" id="IPR023510">
    <property type="entry name" value="MSDH_GmP_bac"/>
</dbReference>
<dbReference type="NCBIfam" id="TIGR01722">
    <property type="entry name" value="MMSDH"/>
    <property type="match status" value="1"/>
</dbReference>
<dbReference type="PANTHER" id="PTHR43866">
    <property type="entry name" value="MALONATE-SEMIALDEHYDE DEHYDROGENASE"/>
    <property type="match status" value="1"/>
</dbReference>
<dbReference type="PANTHER" id="PTHR43866:SF4">
    <property type="entry name" value="MALONATE-SEMIALDEHYDE DEHYDROGENASE"/>
    <property type="match status" value="1"/>
</dbReference>
<dbReference type="Pfam" id="PF00171">
    <property type="entry name" value="Aldedh"/>
    <property type="match status" value="1"/>
</dbReference>
<dbReference type="SUPFAM" id="SSF53720">
    <property type="entry name" value="ALDH-like"/>
    <property type="match status" value="1"/>
</dbReference>
<dbReference type="PROSITE" id="PS00070">
    <property type="entry name" value="ALDEHYDE_DEHYDR_CYS"/>
    <property type="match status" value="1"/>
</dbReference>
<proteinExistence type="inferred from homology"/>
<keyword id="KW-0520">NAD</keyword>
<keyword id="KW-0560">Oxidoreductase</keyword>
<accession>A7GPH3</accession>
<comment type="function">
    <text evidence="1">Catalyzes the oxidation of malonate semialdehyde (MSA) and methylmalonate semialdehyde (MMSA) into acetyl-CoA and propanoyl-CoA, respectively. Is involved in a myo-inositol catabolic pathway. Bicarbonate, and not CO2, is the end-product of the enzymatic reaction.</text>
</comment>
<comment type="catalytic activity">
    <reaction evidence="1">
        <text>3-oxopropanoate + NAD(+) + CoA + H2O = hydrogencarbonate + acetyl-CoA + NADH + H(+)</text>
        <dbReference type="Rhea" id="RHEA:76615"/>
        <dbReference type="ChEBI" id="CHEBI:15377"/>
        <dbReference type="ChEBI" id="CHEBI:15378"/>
        <dbReference type="ChEBI" id="CHEBI:17544"/>
        <dbReference type="ChEBI" id="CHEBI:33190"/>
        <dbReference type="ChEBI" id="CHEBI:57287"/>
        <dbReference type="ChEBI" id="CHEBI:57288"/>
        <dbReference type="ChEBI" id="CHEBI:57540"/>
        <dbReference type="ChEBI" id="CHEBI:57945"/>
        <dbReference type="EC" id="1.2.1.27"/>
    </reaction>
    <physiologicalReaction direction="left-to-right" evidence="1">
        <dbReference type="Rhea" id="RHEA:76616"/>
    </physiologicalReaction>
</comment>
<comment type="catalytic activity">
    <reaction evidence="1">
        <text>2-methyl-3-oxopropanoate + NAD(+) + CoA + H2O = propanoyl-CoA + hydrogencarbonate + NADH + H(+)</text>
        <dbReference type="Rhea" id="RHEA:20804"/>
        <dbReference type="ChEBI" id="CHEBI:15377"/>
        <dbReference type="ChEBI" id="CHEBI:15378"/>
        <dbReference type="ChEBI" id="CHEBI:17544"/>
        <dbReference type="ChEBI" id="CHEBI:57287"/>
        <dbReference type="ChEBI" id="CHEBI:57392"/>
        <dbReference type="ChEBI" id="CHEBI:57540"/>
        <dbReference type="ChEBI" id="CHEBI:57700"/>
        <dbReference type="ChEBI" id="CHEBI:57945"/>
        <dbReference type="EC" id="1.2.1.27"/>
    </reaction>
    <physiologicalReaction direction="left-to-right" evidence="1">
        <dbReference type="Rhea" id="RHEA:20805"/>
    </physiologicalReaction>
</comment>
<comment type="pathway">
    <text evidence="1">Polyol metabolism; myo-inositol degradation into acetyl-CoA; acetyl-CoA from myo-inositol: step 7/7.</text>
</comment>
<comment type="subunit">
    <text evidence="1">Homotetramer.</text>
</comment>
<comment type="similarity">
    <text evidence="1">Belongs to the aldehyde dehydrogenase family. IolA subfamily.</text>
</comment>
<protein>
    <recommendedName>
        <fullName evidence="1">Malonate-semialdehyde dehydrogenase</fullName>
        <shortName evidence="1">MSA dehydrogenase</shortName>
        <ecNumber evidence="1">1.2.1.27</ecNumber>
    </recommendedName>
    <alternativeName>
        <fullName evidence="1">Methylmalonate-semialdehyde dehydrogenase</fullName>
        <shortName evidence="1">MMSA dehydrogenase</shortName>
        <shortName evidence="1">MSDH</shortName>
    </alternativeName>
</protein>
<sequence>MITTEIKRVKNHINGEWVESTGTEVEAVPNPATGKIIAYVPLSPKEDVERAVEAAKNAYETWSKVPVPNRSRMLYKYLQLLQENKDELSKIITLENGKTLKDASGEVQRGIEAVELATSAPNLMMGQALPNIAGGIDGSIWRYPLGVVAGITPFNFPMMIPLWMFPLAIACGNTFVLKTSERTPLLAERLVELFYEAGFPKGVLNLVQGGKEVVNSILENKEIQAVSFVGSEPVARYVYETGTKYGKRVQALAGAKNHAIVMPDCNLEKTVQGVIGSAFGSSGERCMACSVVAVLDEIADEFIDALVSETRKLKVGDGFHEENYVGPLIRESHKERVIGYINSGVADGASLLVDGRQIKEDVEGGYFVGATIFDGVNQNMKIWQDEIFAPVLSIVRVRDLEEGIQLTNQSKFANGAVIYTSSGKHAQTFRDHIDAGMIGVNVNVPAPMAFFAFAGNKASFYGDLGTNGKDGVQFYTRKKVVTERWF</sequence>
<organism>
    <name type="scientific">Bacillus cytotoxicus (strain DSM 22905 / CIP 110041 / 391-98 / NVH 391-98)</name>
    <dbReference type="NCBI Taxonomy" id="315749"/>
    <lineage>
        <taxon>Bacteria</taxon>
        <taxon>Bacillati</taxon>
        <taxon>Bacillota</taxon>
        <taxon>Bacilli</taxon>
        <taxon>Bacillales</taxon>
        <taxon>Bacillaceae</taxon>
        <taxon>Bacillus</taxon>
        <taxon>Bacillus cereus group</taxon>
    </lineage>
</organism>
<feature type="chain" id="PRO_0000352325" description="Malonate-semialdehyde dehydrogenase">
    <location>
        <begin position="1"/>
        <end position="486"/>
    </location>
</feature>
<feature type="active site" description="Nucleophile" evidence="1">
    <location>
        <position position="286"/>
    </location>
</feature>
<feature type="binding site" evidence="1">
    <location>
        <position position="154"/>
    </location>
    <ligand>
        <name>NAD(+)</name>
        <dbReference type="ChEBI" id="CHEBI:57540"/>
    </ligand>
</feature>
<feature type="binding site" evidence="1">
    <location>
        <position position="178"/>
    </location>
    <ligand>
        <name>NAD(+)</name>
        <dbReference type="ChEBI" id="CHEBI:57540"/>
    </ligand>
</feature>
<feature type="binding site" evidence="1">
    <location>
        <position position="181"/>
    </location>
    <ligand>
        <name>NAD(+)</name>
        <dbReference type="ChEBI" id="CHEBI:57540"/>
    </ligand>
</feature>
<feature type="binding site" evidence="1">
    <location>
        <position position="182"/>
    </location>
    <ligand>
        <name>NAD(+)</name>
        <dbReference type="ChEBI" id="CHEBI:57540"/>
    </ligand>
</feature>
<feature type="binding site" evidence="1">
    <location>
        <position position="231"/>
    </location>
    <ligand>
        <name>NAD(+)</name>
        <dbReference type="ChEBI" id="CHEBI:57540"/>
    </ligand>
</feature>
<feature type="binding site" evidence="1">
    <location>
        <position position="386"/>
    </location>
    <ligand>
        <name>NAD(+)</name>
        <dbReference type="ChEBI" id="CHEBI:57540"/>
    </ligand>
</feature>
<evidence type="ECO:0000255" key="1">
    <source>
        <dbReference type="HAMAP-Rule" id="MF_01670"/>
    </source>
</evidence>